<keyword id="KW-0067">ATP-binding</keyword>
<keyword id="KW-0173">Coenzyme A biosynthesis</keyword>
<keyword id="KW-0963">Cytoplasm</keyword>
<keyword id="KW-0418">Kinase</keyword>
<keyword id="KW-0479">Metal-binding</keyword>
<keyword id="KW-0547">Nucleotide-binding</keyword>
<keyword id="KW-0630">Potassium</keyword>
<keyword id="KW-1185">Reference proteome</keyword>
<keyword id="KW-0808">Transferase</keyword>
<accession>Q2A1V2</accession>
<name>COAX2_FRATH</name>
<dbReference type="EC" id="2.7.1.33" evidence="1"/>
<dbReference type="EMBL" id="AM233362">
    <property type="protein sequence ID" value="CAJ80104.1"/>
    <property type="molecule type" value="Genomic_DNA"/>
</dbReference>
<dbReference type="RefSeq" id="WP_003017101.1">
    <property type="nucleotide sequence ID" value="NZ_CP009694.1"/>
</dbReference>
<dbReference type="SMR" id="Q2A1V2"/>
<dbReference type="KEGG" id="ftl:FTL_1665"/>
<dbReference type="UniPathway" id="UPA00241">
    <property type="reaction ID" value="UER00352"/>
</dbReference>
<dbReference type="Proteomes" id="UP000001944">
    <property type="component" value="Chromosome"/>
</dbReference>
<dbReference type="GO" id="GO:0005737">
    <property type="term" value="C:cytoplasm"/>
    <property type="evidence" value="ECO:0007669"/>
    <property type="project" value="UniProtKB-SubCell"/>
</dbReference>
<dbReference type="GO" id="GO:0005524">
    <property type="term" value="F:ATP binding"/>
    <property type="evidence" value="ECO:0007669"/>
    <property type="project" value="UniProtKB-UniRule"/>
</dbReference>
<dbReference type="GO" id="GO:0046872">
    <property type="term" value="F:metal ion binding"/>
    <property type="evidence" value="ECO:0007669"/>
    <property type="project" value="UniProtKB-KW"/>
</dbReference>
<dbReference type="GO" id="GO:0004594">
    <property type="term" value="F:pantothenate kinase activity"/>
    <property type="evidence" value="ECO:0007669"/>
    <property type="project" value="UniProtKB-UniRule"/>
</dbReference>
<dbReference type="GO" id="GO:0015937">
    <property type="term" value="P:coenzyme A biosynthetic process"/>
    <property type="evidence" value="ECO:0007669"/>
    <property type="project" value="UniProtKB-UniRule"/>
</dbReference>
<dbReference type="CDD" id="cd24015">
    <property type="entry name" value="ASKHA_NBD_PanK-III"/>
    <property type="match status" value="1"/>
</dbReference>
<dbReference type="Gene3D" id="3.30.420.40">
    <property type="match status" value="2"/>
</dbReference>
<dbReference type="HAMAP" id="MF_01274">
    <property type="entry name" value="Pantothen_kinase_3"/>
    <property type="match status" value="1"/>
</dbReference>
<dbReference type="InterPro" id="IPR043129">
    <property type="entry name" value="ATPase_NBD"/>
</dbReference>
<dbReference type="InterPro" id="IPR004619">
    <property type="entry name" value="Type_III_PanK"/>
</dbReference>
<dbReference type="NCBIfam" id="TIGR00671">
    <property type="entry name" value="baf"/>
    <property type="match status" value="1"/>
</dbReference>
<dbReference type="NCBIfam" id="NF009855">
    <property type="entry name" value="PRK13321.1"/>
    <property type="match status" value="1"/>
</dbReference>
<dbReference type="NCBIfam" id="NF009861">
    <property type="entry name" value="PRK13324.1"/>
    <property type="match status" value="1"/>
</dbReference>
<dbReference type="PANTHER" id="PTHR34265">
    <property type="entry name" value="TYPE III PANTOTHENATE KINASE"/>
    <property type="match status" value="1"/>
</dbReference>
<dbReference type="PANTHER" id="PTHR34265:SF1">
    <property type="entry name" value="TYPE III PANTOTHENATE KINASE"/>
    <property type="match status" value="1"/>
</dbReference>
<dbReference type="Pfam" id="PF03309">
    <property type="entry name" value="Pan_kinase"/>
    <property type="match status" value="1"/>
</dbReference>
<dbReference type="SUPFAM" id="SSF53067">
    <property type="entry name" value="Actin-like ATPase domain"/>
    <property type="match status" value="2"/>
</dbReference>
<reference key="1">
    <citation type="submission" date="2006-03" db="EMBL/GenBank/DDBJ databases">
        <title>Complete genome sequence of Francisella tularensis LVS (Live Vaccine Strain).</title>
        <authorList>
            <person name="Chain P."/>
            <person name="Larimer F."/>
            <person name="Land M."/>
            <person name="Stilwagen S."/>
            <person name="Larsson P."/>
            <person name="Bearden S."/>
            <person name="Chu M."/>
            <person name="Oyston P."/>
            <person name="Forsman M."/>
            <person name="Andersson S."/>
            <person name="Lindler L."/>
            <person name="Titball R."/>
            <person name="Garcia E."/>
        </authorList>
    </citation>
    <scope>NUCLEOTIDE SEQUENCE [LARGE SCALE GENOMIC DNA]</scope>
    <source>
        <strain>LVS</strain>
    </source>
</reference>
<protein>
    <recommendedName>
        <fullName evidence="1">Type III pantothenate kinase 2</fullName>
        <ecNumber evidence="1">2.7.1.33</ecNumber>
    </recommendedName>
    <alternativeName>
        <fullName evidence="1">PanK-III 2</fullName>
    </alternativeName>
    <alternativeName>
        <fullName evidence="1">Pantothenic acid kinase 2</fullName>
    </alternativeName>
</protein>
<feature type="chain" id="PRO_0000267529" description="Type III pantothenate kinase 2">
    <location>
        <begin position="1"/>
        <end position="254"/>
    </location>
</feature>
<feature type="active site" description="Proton acceptor" evidence="1">
    <location>
        <position position="109"/>
    </location>
</feature>
<feature type="binding site" evidence="1">
    <location>
        <begin position="6"/>
        <end position="13"/>
    </location>
    <ligand>
        <name>ATP</name>
        <dbReference type="ChEBI" id="CHEBI:30616"/>
    </ligand>
</feature>
<feature type="binding site" evidence="1">
    <location>
        <begin position="107"/>
        <end position="110"/>
    </location>
    <ligand>
        <name>substrate</name>
    </ligand>
</feature>
<feature type="binding site" evidence="1">
    <location>
        <position position="130"/>
    </location>
    <ligand>
        <name>K(+)</name>
        <dbReference type="ChEBI" id="CHEBI:29103"/>
    </ligand>
</feature>
<feature type="binding site" evidence="1">
    <location>
        <position position="133"/>
    </location>
    <ligand>
        <name>ATP</name>
        <dbReference type="ChEBI" id="CHEBI:30616"/>
    </ligand>
</feature>
<feature type="binding site" evidence="1">
    <location>
        <position position="185"/>
    </location>
    <ligand>
        <name>substrate</name>
    </ligand>
</feature>
<organism>
    <name type="scientific">Francisella tularensis subsp. holarctica (strain LVS)</name>
    <dbReference type="NCBI Taxonomy" id="376619"/>
    <lineage>
        <taxon>Bacteria</taxon>
        <taxon>Pseudomonadati</taxon>
        <taxon>Pseudomonadota</taxon>
        <taxon>Gammaproteobacteria</taxon>
        <taxon>Thiotrichales</taxon>
        <taxon>Francisellaceae</taxon>
        <taxon>Francisella</taxon>
    </lineage>
</organism>
<evidence type="ECO:0000255" key="1">
    <source>
        <dbReference type="HAMAP-Rule" id="MF_01274"/>
    </source>
</evidence>
<sequence>MLLVMDMGNSHIHIGVFDGDIIVSQIRYATSSVDSTSDQMGVFLRQALRENSVDLGKIDGYGISSVVPHLNYSLGSAVIKYFNIKPFFISMDTTDLDMSAVEAHQVGADRIASCISAIADHPNKDLLIIDLGTATTFDLVTKDKKYLSGSIMPGVKLSLNALCQGASQLSSVTIVKPEVAIGYDTKTNIRSGLYYGHLGALRRSVEEFGSPVYTIATGGFAGLFKEEDIFNEISPDLILRGIRIAFLENNKKGV</sequence>
<gene>
    <name evidence="1" type="primary">coaX2</name>
    <name type="ordered locus">FTL_1665</name>
</gene>
<proteinExistence type="inferred from homology"/>
<comment type="function">
    <text evidence="1">Catalyzes the phosphorylation of pantothenate (Pan), the first step in CoA biosynthesis.</text>
</comment>
<comment type="catalytic activity">
    <reaction evidence="1">
        <text>(R)-pantothenate + ATP = (R)-4'-phosphopantothenate + ADP + H(+)</text>
        <dbReference type="Rhea" id="RHEA:16373"/>
        <dbReference type="ChEBI" id="CHEBI:10986"/>
        <dbReference type="ChEBI" id="CHEBI:15378"/>
        <dbReference type="ChEBI" id="CHEBI:29032"/>
        <dbReference type="ChEBI" id="CHEBI:30616"/>
        <dbReference type="ChEBI" id="CHEBI:456216"/>
        <dbReference type="EC" id="2.7.1.33"/>
    </reaction>
</comment>
<comment type="cofactor">
    <cofactor evidence="1">
        <name>NH4(+)</name>
        <dbReference type="ChEBI" id="CHEBI:28938"/>
    </cofactor>
    <cofactor evidence="1">
        <name>K(+)</name>
        <dbReference type="ChEBI" id="CHEBI:29103"/>
    </cofactor>
    <text evidence="1">A monovalent cation. Ammonium or potassium.</text>
</comment>
<comment type="pathway">
    <text evidence="1">Cofactor biosynthesis; coenzyme A biosynthesis; CoA from (R)-pantothenate: step 1/5.</text>
</comment>
<comment type="subunit">
    <text evidence="1">Homodimer.</text>
</comment>
<comment type="subcellular location">
    <subcellularLocation>
        <location evidence="1">Cytoplasm</location>
    </subcellularLocation>
</comment>
<comment type="similarity">
    <text evidence="1">Belongs to the type III pantothenate kinase family.</text>
</comment>